<sequence>MADSTARTVKDVNPHEFVKAYSAHLKRSGKMELPEWVDIVKTARFKELPPYDPDWYYTRAASIARKIYLRQGIGVGGFQKIYGGRQRNGSRPPHFCKSSGAISRNILQQLQKMGIIDVDPKGGRLITSQGRRDLDQVAGRVDVTIA</sequence>
<dbReference type="EMBL" id="AC114983">
    <property type="protein sequence ID" value="AAP20842.1"/>
    <property type="molecule type" value="Genomic_DNA"/>
</dbReference>
<dbReference type="EMBL" id="AC114983">
    <property type="protein sequence ID" value="AAP20855.1"/>
    <property type="molecule type" value="Genomic_DNA"/>
</dbReference>
<dbReference type="EMBL" id="DP000009">
    <property type="protein sequence ID" value="ABF96698.1"/>
    <property type="molecule type" value="Genomic_DNA"/>
</dbReference>
<dbReference type="EMBL" id="AP008209">
    <property type="protein sequence ID" value="BAF12311.1"/>
    <property type="molecule type" value="Genomic_DNA"/>
</dbReference>
<dbReference type="EMBL" id="AP014959">
    <property type="protein sequence ID" value="BAS84770.1"/>
    <property type="molecule type" value="Genomic_DNA"/>
</dbReference>
<dbReference type="EMBL" id="AP014959">
    <property type="protein sequence ID" value="BAS84768.1"/>
    <property type="molecule type" value="Genomic_DNA"/>
</dbReference>
<dbReference type="EMBL" id="CM000140">
    <property type="protein sequence ID" value="EAZ27386.1"/>
    <property type="molecule type" value="Genomic_DNA"/>
</dbReference>
<dbReference type="EMBL" id="CM000140">
    <property type="protein sequence ID" value="EAZ27384.1"/>
    <property type="molecule type" value="Genomic_DNA"/>
</dbReference>
<dbReference type="EMBL" id="AK067470">
    <property type="protein sequence ID" value="BAG90433.1"/>
    <property type="molecule type" value="mRNA"/>
</dbReference>
<dbReference type="EMBL" id="AK099047">
    <property type="protein sequence ID" value="BAG93892.1"/>
    <property type="molecule type" value="mRNA"/>
</dbReference>
<dbReference type="EMBL" id="AK104954">
    <property type="protein sequence ID" value="BAG97039.1"/>
    <property type="molecule type" value="mRNA"/>
</dbReference>
<dbReference type="SMR" id="P40978"/>
<dbReference type="FunCoup" id="P40978">
    <property type="interactions" value="2247"/>
</dbReference>
<dbReference type="STRING" id="39947.P40978"/>
<dbReference type="PaxDb" id="39947-P40978"/>
<dbReference type="EnsemblPlants" id="Os03t0424500-01">
    <property type="protein sequence ID" value="Os03t0424500-01"/>
    <property type="gene ID" value="Os03g0424500"/>
</dbReference>
<dbReference type="EnsemblPlants" id="Os03t0424800-00">
    <property type="protein sequence ID" value="Os03t0424800-00"/>
    <property type="gene ID" value="Os03g0424800"/>
</dbReference>
<dbReference type="Gramene" id="Os03t0424500-01">
    <property type="protein sequence ID" value="Os03t0424500-01"/>
    <property type="gene ID" value="Os03g0424500"/>
</dbReference>
<dbReference type="Gramene" id="Os03t0424800-00">
    <property type="protein sequence ID" value="Os03t0424800-00"/>
    <property type="gene ID" value="Os03g0424800"/>
</dbReference>
<dbReference type="KEGG" id="dosa:Os03g0424500"/>
<dbReference type="KEGG" id="osa:4333148"/>
<dbReference type="KEGG" id="osa:4333150"/>
<dbReference type="eggNOG" id="KOG3411">
    <property type="taxonomic scope" value="Eukaryota"/>
</dbReference>
<dbReference type="HOGENOM" id="CLU_108559_0_0_1"/>
<dbReference type="InParanoid" id="P40978"/>
<dbReference type="OMA" id="WAPFVKT"/>
<dbReference type="OrthoDB" id="428974at2759"/>
<dbReference type="Proteomes" id="UP000000763">
    <property type="component" value="Chromosome 3"/>
</dbReference>
<dbReference type="Proteomes" id="UP000007752">
    <property type="component" value="Chromosome 3"/>
</dbReference>
<dbReference type="Proteomes" id="UP000059680">
    <property type="component" value="Chromosome 3"/>
</dbReference>
<dbReference type="GO" id="GO:0022627">
    <property type="term" value="C:cytosolic small ribosomal subunit"/>
    <property type="evidence" value="ECO:0000318"/>
    <property type="project" value="GO_Central"/>
</dbReference>
<dbReference type="GO" id="GO:0003723">
    <property type="term" value="F:RNA binding"/>
    <property type="evidence" value="ECO:0000318"/>
    <property type="project" value="GO_Central"/>
</dbReference>
<dbReference type="GO" id="GO:0003735">
    <property type="term" value="F:structural constituent of ribosome"/>
    <property type="evidence" value="ECO:0000318"/>
    <property type="project" value="GO_Central"/>
</dbReference>
<dbReference type="GO" id="GO:0000028">
    <property type="term" value="P:ribosomal small subunit assembly"/>
    <property type="evidence" value="ECO:0000318"/>
    <property type="project" value="GO_Central"/>
</dbReference>
<dbReference type="GO" id="GO:0006412">
    <property type="term" value="P:translation"/>
    <property type="evidence" value="ECO:0007669"/>
    <property type="project" value="InterPro"/>
</dbReference>
<dbReference type="FunFam" id="1.10.10.10:FF:000118">
    <property type="entry name" value="40S ribosomal protein S19"/>
    <property type="match status" value="1"/>
</dbReference>
<dbReference type="Gene3D" id="1.10.10.10">
    <property type="entry name" value="Winged helix-like DNA-binding domain superfamily/Winged helix DNA-binding domain"/>
    <property type="match status" value="1"/>
</dbReference>
<dbReference type="InterPro" id="IPR001266">
    <property type="entry name" value="Ribosomal_eS19"/>
</dbReference>
<dbReference type="InterPro" id="IPR018277">
    <property type="entry name" value="Ribosomal_eS19_CS"/>
</dbReference>
<dbReference type="InterPro" id="IPR036388">
    <property type="entry name" value="WH-like_DNA-bd_sf"/>
</dbReference>
<dbReference type="InterPro" id="IPR036390">
    <property type="entry name" value="WH_DNA-bd_sf"/>
</dbReference>
<dbReference type="PANTHER" id="PTHR11710">
    <property type="entry name" value="40S RIBOSOMAL PROTEIN S19"/>
    <property type="match status" value="1"/>
</dbReference>
<dbReference type="PANTHER" id="PTHR11710:SF0">
    <property type="entry name" value="40S RIBOSOMAL PROTEIN S19"/>
    <property type="match status" value="1"/>
</dbReference>
<dbReference type="Pfam" id="PF01090">
    <property type="entry name" value="Ribosomal_S19e"/>
    <property type="match status" value="1"/>
</dbReference>
<dbReference type="SMART" id="SM01413">
    <property type="entry name" value="Ribosomal_S19e"/>
    <property type="match status" value="1"/>
</dbReference>
<dbReference type="SUPFAM" id="SSF46785">
    <property type="entry name" value="Winged helix' DNA-binding domain"/>
    <property type="match status" value="1"/>
</dbReference>
<dbReference type="PROSITE" id="PS00628">
    <property type="entry name" value="RIBOSOMAL_S19E"/>
    <property type="match status" value="1"/>
</dbReference>
<proteinExistence type="evidence at transcript level"/>
<protein>
    <recommendedName>
        <fullName evidence="1">Small ribosomal subunit protein eS19</fullName>
    </recommendedName>
    <alternativeName>
        <fullName>40S ribosomal protein S19</fullName>
    </alternativeName>
</protein>
<evidence type="ECO:0000305" key="1"/>
<evidence type="ECO:0000312" key="2">
    <source>
        <dbReference type="EMBL" id="EAZ27384.1"/>
    </source>
</evidence>
<evidence type="ECO:0000312" key="3">
    <source>
        <dbReference type="EMBL" id="EAZ27386.1"/>
    </source>
</evidence>
<accession>P40978</accession>
<accession>Q10JD4</accession>
<accession>Q7G6L4</accession>
<organism>
    <name type="scientific">Oryza sativa subsp. japonica</name>
    <name type="common">Rice</name>
    <dbReference type="NCBI Taxonomy" id="39947"/>
    <lineage>
        <taxon>Eukaryota</taxon>
        <taxon>Viridiplantae</taxon>
        <taxon>Streptophyta</taxon>
        <taxon>Embryophyta</taxon>
        <taxon>Tracheophyta</taxon>
        <taxon>Spermatophyta</taxon>
        <taxon>Magnoliopsida</taxon>
        <taxon>Liliopsida</taxon>
        <taxon>Poales</taxon>
        <taxon>Poaceae</taxon>
        <taxon>BOP clade</taxon>
        <taxon>Oryzoideae</taxon>
        <taxon>Oryzeae</taxon>
        <taxon>Oryzinae</taxon>
        <taxon>Oryza</taxon>
        <taxon>Oryza sativa</taxon>
    </lineage>
</organism>
<name>RS19_ORYSJ</name>
<keyword id="KW-1185">Reference proteome</keyword>
<keyword id="KW-0687">Ribonucleoprotein</keyword>
<keyword id="KW-0689">Ribosomal protein</keyword>
<comment type="similarity">
    <text evidence="1">Belongs to the eukaryotic ribosomal protein eS19 family.</text>
</comment>
<feature type="chain" id="PRO_0000153831" description="Small ribosomal subunit protein eS19">
    <location>
        <begin position="1"/>
        <end position="146"/>
    </location>
</feature>
<reference key="1">
    <citation type="journal article" date="2005" name="Genome Res.">
        <title>Sequence, annotation, and analysis of synteny between rice chromosome 3 and diverged grass species.</title>
        <authorList>
            <consortium name="The rice chromosome 3 sequencing consortium"/>
            <person name="Buell C.R."/>
            <person name="Yuan Q."/>
            <person name="Ouyang S."/>
            <person name="Liu J."/>
            <person name="Zhu W."/>
            <person name="Wang A."/>
            <person name="Maiti R."/>
            <person name="Haas B."/>
            <person name="Wortman J."/>
            <person name="Pertea M."/>
            <person name="Jones K.M."/>
            <person name="Kim M."/>
            <person name="Overton L."/>
            <person name="Tsitrin T."/>
            <person name="Fadrosh D."/>
            <person name="Bera J."/>
            <person name="Weaver B."/>
            <person name="Jin S."/>
            <person name="Johri S."/>
            <person name="Reardon M."/>
            <person name="Webb K."/>
            <person name="Hill J."/>
            <person name="Moffat K."/>
            <person name="Tallon L."/>
            <person name="Van Aken S."/>
            <person name="Lewis M."/>
            <person name="Utterback T."/>
            <person name="Feldblyum T."/>
            <person name="Zismann V."/>
            <person name="Iobst S."/>
            <person name="Hsiao J."/>
            <person name="de Vazeille A.R."/>
            <person name="Salzberg S.L."/>
            <person name="White O."/>
            <person name="Fraser C.M."/>
            <person name="Yu Y."/>
            <person name="Kim H."/>
            <person name="Rambo T."/>
            <person name="Currie J."/>
            <person name="Collura K."/>
            <person name="Kernodle-Thompson S."/>
            <person name="Wei F."/>
            <person name="Kudrna K."/>
            <person name="Ammiraju J.S.S."/>
            <person name="Luo M."/>
            <person name="Goicoechea J.L."/>
            <person name="Wing R.A."/>
            <person name="Henry D."/>
            <person name="Oates R."/>
            <person name="Palmer M."/>
            <person name="Pries G."/>
            <person name="Saski C."/>
            <person name="Simmons J."/>
            <person name="Soderlund C."/>
            <person name="Nelson W."/>
            <person name="de la Bastide M."/>
            <person name="Spiegel L."/>
            <person name="Nascimento L."/>
            <person name="Huang E."/>
            <person name="Preston R."/>
            <person name="Zutavern T."/>
            <person name="Palmer L."/>
            <person name="O'Shaughnessy A."/>
            <person name="Dike S."/>
            <person name="McCombie W.R."/>
            <person name="Minx P."/>
            <person name="Cordum H."/>
            <person name="Wilson R."/>
            <person name="Jin W."/>
            <person name="Lee H.R."/>
            <person name="Jiang J."/>
            <person name="Jackson S."/>
        </authorList>
    </citation>
    <scope>NUCLEOTIDE SEQUENCE [LARGE SCALE GENOMIC DNA]</scope>
    <source>
        <strain>cv. Nipponbare</strain>
    </source>
</reference>
<reference key="2">
    <citation type="journal article" date="2005" name="Nature">
        <title>The map-based sequence of the rice genome.</title>
        <authorList>
            <consortium name="International rice genome sequencing project (IRGSP)"/>
        </authorList>
    </citation>
    <scope>NUCLEOTIDE SEQUENCE [LARGE SCALE GENOMIC DNA]</scope>
    <source>
        <strain>cv. Nipponbare</strain>
    </source>
</reference>
<reference key="3">
    <citation type="journal article" date="2008" name="Nucleic Acids Res.">
        <title>The rice annotation project database (RAP-DB): 2008 update.</title>
        <authorList>
            <consortium name="The rice annotation project (RAP)"/>
        </authorList>
    </citation>
    <scope>GENOME REANNOTATION</scope>
    <source>
        <strain>cv. Nipponbare</strain>
    </source>
</reference>
<reference key="4">
    <citation type="journal article" date="2013" name="Rice">
        <title>Improvement of the Oryza sativa Nipponbare reference genome using next generation sequence and optical map data.</title>
        <authorList>
            <person name="Kawahara Y."/>
            <person name="de la Bastide M."/>
            <person name="Hamilton J.P."/>
            <person name="Kanamori H."/>
            <person name="McCombie W.R."/>
            <person name="Ouyang S."/>
            <person name="Schwartz D.C."/>
            <person name="Tanaka T."/>
            <person name="Wu J."/>
            <person name="Zhou S."/>
            <person name="Childs K.L."/>
            <person name="Davidson R.M."/>
            <person name="Lin H."/>
            <person name="Quesada-Ocampo L."/>
            <person name="Vaillancourt B."/>
            <person name="Sakai H."/>
            <person name="Lee S.S."/>
            <person name="Kim J."/>
            <person name="Numa H."/>
            <person name="Itoh T."/>
            <person name="Buell C.R."/>
            <person name="Matsumoto T."/>
        </authorList>
    </citation>
    <scope>GENOME REANNOTATION</scope>
    <source>
        <strain>cv. Nipponbare</strain>
    </source>
</reference>
<reference key="5">
    <citation type="journal article" date="2005" name="PLoS Biol.">
        <title>The genomes of Oryza sativa: a history of duplications.</title>
        <authorList>
            <person name="Yu J."/>
            <person name="Wang J."/>
            <person name="Lin W."/>
            <person name="Li S."/>
            <person name="Li H."/>
            <person name="Zhou J."/>
            <person name="Ni P."/>
            <person name="Dong W."/>
            <person name="Hu S."/>
            <person name="Zeng C."/>
            <person name="Zhang J."/>
            <person name="Zhang Y."/>
            <person name="Li R."/>
            <person name="Xu Z."/>
            <person name="Li S."/>
            <person name="Li X."/>
            <person name="Zheng H."/>
            <person name="Cong L."/>
            <person name="Lin L."/>
            <person name="Yin J."/>
            <person name="Geng J."/>
            <person name="Li G."/>
            <person name="Shi J."/>
            <person name="Liu J."/>
            <person name="Lv H."/>
            <person name="Li J."/>
            <person name="Wang J."/>
            <person name="Deng Y."/>
            <person name="Ran L."/>
            <person name="Shi X."/>
            <person name="Wang X."/>
            <person name="Wu Q."/>
            <person name="Li C."/>
            <person name="Ren X."/>
            <person name="Wang J."/>
            <person name="Wang X."/>
            <person name="Li D."/>
            <person name="Liu D."/>
            <person name="Zhang X."/>
            <person name="Ji Z."/>
            <person name="Zhao W."/>
            <person name="Sun Y."/>
            <person name="Zhang Z."/>
            <person name="Bao J."/>
            <person name="Han Y."/>
            <person name="Dong L."/>
            <person name="Ji J."/>
            <person name="Chen P."/>
            <person name="Wu S."/>
            <person name="Liu J."/>
            <person name="Xiao Y."/>
            <person name="Bu D."/>
            <person name="Tan J."/>
            <person name="Yang L."/>
            <person name="Ye C."/>
            <person name="Zhang J."/>
            <person name="Xu J."/>
            <person name="Zhou Y."/>
            <person name="Yu Y."/>
            <person name="Zhang B."/>
            <person name="Zhuang S."/>
            <person name="Wei H."/>
            <person name="Liu B."/>
            <person name="Lei M."/>
            <person name="Yu H."/>
            <person name="Li Y."/>
            <person name="Xu H."/>
            <person name="Wei S."/>
            <person name="He X."/>
            <person name="Fang L."/>
            <person name="Zhang Z."/>
            <person name="Zhang Y."/>
            <person name="Huang X."/>
            <person name="Su Z."/>
            <person name="Tong W."/>
            <person name="Li J."/>
            <person name="Tong Z."/>
            <person name="Li S."/>
            <person name="Ye J."/>
            <person name="Wang L."/>
            <person name="Fang L."/>
            <person name="Lei T."/>
            <person name="Chen C.-S."/>
            <person name="Chen H.-C."/>
            <person name="Xu Z."/>
            <person name="Li H."/>
            <person name="Huang H."/>
            <person name="Zhang F."/>
            <person name="Xu H."/>
            <person name="Li N."/>
            <person name="Zhao C."/>
            <person name="Li S."/>
            <person name="Dong L."/>
            <person name="Huang Y."/>
            <person name="Li L."/>
            <person name="Xi Y."/>
            <person name="Qi Q."/>
            <person name="Li W."/>
            <person name="Zhang B."/>
            <person name="Hu W."/>
            <person name="Zhang Y."/>
            <person name="Tian X."/>
            <person name="Jiao Y."/>
            <person name="Liang X."/>
            <person name="Jin J."/>
            <person name="Gao L."/>
            <person name="Zheng W."/>
            <person name="Hao B."/>
            <person name="Liu S.-M."/>
            <person name="Wang W."/>
            <person name="Yuan L."/>
            <person name="Cao M."/>
            <person name="McDermott J."/>
            <person name="Samudrala R."/>
            <person name="Wang J."/>
            <person name="Wong G.K.-S."/>
            <person name="Yang H."/>
        </authorList>
    </citation>
    <scope>NUCLEOTIDE SEQUENCE [LARGE SCALE GENOMIC DNA]</scope>
    <source>
        <strain>cv. Nipponbare</strain>
    </source>
</reference>
<reference key="6">
    <citation type="journal article" date="2003" name="Science">
        <title>Collection, mapping, and annotation of over 28,000 cDNA clones from japonica rice.</title>
        <authorList>
            <consortium name="The rice full-length cDNA consortium"/>
        </authorList>
    </citation>
    <scope>NUCLEOTIDE SEQUENCE [LARGE SCALE MRNA] (OS03G0424500)</scope>
    <source>
        <strain>cv. Nipponbare</strain>
    </source>
</reference>
<gene>
    <name type="primary">RPS19A</name>
    <name type="ordered locus">Os03g0424800</name>
    <name type="ordered locus">LOC_Os03g31134</name>
    <name evidence="3" type="ORF">OsJ_11334</name>
    <name type="ORF">OSJNBa0032H19.4</name>
</gene>
<gene>
    <name type="primary">RPS19B</name>
    <name type="ordered locus">Os03g0424500</name>
    <name type="ordered locus">LOC_Os03g31090</name>
    <name evidence="2" type="ORF">OsJ_11332</name>
    <name type="ORF">OSJNBa0032H19.8</name>
</gene>